<accession>P14167</accession>
<accession>Q3M3B4</accession>
<name>RECA_TRIV2</name>
<organism>
    <name type="scientific">Trichormus variabilis (strain ATCC 29413 / PCC 7937)</name>
    <name type="common">Anabaena variabilis</name>
    <dbReference type="NCBI Taxonomy" id="240292"/>
    <lineage>
        <taxon>Bacteria</taxon>
        <taxon>Bacillati</taxon>
        <taxon>Cyanobacteriota</taxon>
        <taxon>Cyanophyceae</taxon>
        <taxon>Nostocales</taxon>
        <taxon>Nostocaceae</taxon>
        <taxon>Trichormus</taxon>
    </lineage>
</organism>
<protein>
    <recommendedName>
        <fullName evidence="1">Protein RecA</fullName>
    </recommendedName>
    <alternativeName>
        <fullName evidence="1">Recombinase A</fullName>
    </alternativeName>
</protein>
<reference key="1">
    <citation type="journal article" date="1989" name="J. Bacteriol.">
        <title>Regulation of expression and nucleotide sequence of the Anabaena variabilis recA gene.</title>
        <authorList>
            <person name="Owttrim G.W."/>
            <person name="Coleman J.R."/>
        </authorList>
    </citation>
    <scope>NUCLEOTIDE SEQUENCE [GENOMIC DNA]</scope>
</reference>
<reference key="2">
    <citation type="journal article" date="2014" name="Stand. Genomic Sci.">
        <title>Complete genome sequence of Anabaena variabilis ATCC 29413.</title>
        <authorList>
            <person name="Thiel T."/>
            <person name="Pratte B.S."/>
            <person name="Zhong J."/>
            <person name="Goodwin L."/>
            <person name="Copeland A."/>
            <person name="Lucas S."/>
            <person name="Han C."/>
            <person name="Pitluck S."/>
            <person name="Land M.L."/>
            <person name="Kyrpides N.C."/>
            <person name="Woyke T."/>
        </authorList>
    </citation>
    <scope>NUCLEOTIDE SEQUENCE [LARGE SCALE GENOMIC DNA]</scope>
    <source>
        <strain>ATCC 29413 / PCC 7937</strain>
    </source>
</reference>
<gene>
    <name evidence="1" type="primary">recA</name>
    <name type="ordered locus">Ava_4925</name>
</gene>
<feature type="chain" id="PRO_0000122641" description="Protein RecA">
    <location>
        <begin position="1"/>
        <end position="358"/>
    </location>
</feature>
<feature type="binding site" evidence="1">
    <location>
        <begin position="69"/>
        <end position="76"/>
    </location>
    <ligand>
        <name>ATP</name>
        <dbReference type="ChEBI" id="CHEBI:30616"/>
    </ligand>
</feature>
<feature type="sequence conflict" description="In Ref. 1; AAA22031." evidence="2" ref="1">
    <original>K</original>
    <variation>R</variation>
    <location>
        <position position="61"/>
    </location>
</feature>
<feature type="sequence conflict" description="In Ref. 1; AAA22031." evidence="2" ref="1">
    <original>H</original>
    <variation>Q</variation>
    <location>
        <position position="100"/>
    </location>
</feature>
<feature type="sequence conflict" description="In Ref. 1; AAA22031." evidence="2" ref="1">
    <original>R</original>
    <variation>P</variation>
    <location>
        <position position="137"/>
    </location>
</feature>
<comment type="function">
    <text>Can catalyze the hydrolysis of ATP in the presence of single-stranded DNA, the ATP-dependent uptake of single-stranded DNA by duplex DNA, and the ATP-dependent hybridization of homologous single-stranded DNAs. It interacts with LexA causing its activation and leading to its autocatalytic cleavage.</text>
</comment>
<comment type="subcellular location">
    <subcellularLocation>
        <location evidence="1">Cytoplasm</location>
    </subcellularLocation>
</comment>
<comment type="similarity">
    <text evidence="1">Belongs to the RecA family.</text>
</comment>
<keyword id="KW-0067">ATP-binding</keyword>
<keyword id="KW-0963">Cytoplasm</keyword>
<keyword id="KW-0227">DNA damage</keyword>
<keyword id="KW-0233">DNA recombination</keyword>
<keyword id="KW-0234">DNA repair</keyword>
<keyword id="KW-0238">DNA-binding</keyword>
<keyword id="KW-0547">Nucleotide-binding</keyword>
<keyword id="KW-0742">SOS response</keyword>
<evidence type="ECO:0000255" key="1">
    <source>
        <dbReference type="HAMAP-Rule" id="MF_00268"/>
    </source>
</evidence>
<evidence type="ECO:0000305" key="2"/>
<dbReference type="EMBL" id="M29680">
    <property type="protein sequence ID" value="AAA22031.1"/>
    <property type="molecule type" value="Genomic_DNA"/>
</dbReference>
<dbReference type="EMBL" id="CP000117">
    <property type="protein sequence ID" value="ABA24522.1"/>
    <property type="molecule type" value="Genomic_DNA"/>
</dbReference>
<dbReference type="PIR" id="A33606">
    <property type="entry name" value="RQAIA"/>
</dbReference>
<dbReference type="SMR" id="P14167"/>
<dbReference type="STRING" id="240292.Ava_4925"/>
<dbReference type="KEGG" id="ava:Ava_4925"/>
<dbReference type="eggNOG" id="COG0468">
    <property type="taxonomic scope" value="Bacteria"/>
</dbReference>
<dbReference type="HOGENOM" id="CLU_040469_3_2_3"/>
<dbReference type="Proteomes" id="UP000002533">
    <property type="component" value="Chromosome"/>
</dbReference>
<dbReference type="GO" id="GO:0005829">
    <property type="term" value="C:cytosol"/>
    <property type="evidence" value="ECO:0007669"/>
    <property type="project" value="TreeGrafter"/>
</dbReference>
<dbReference type="GO" id="GO:0005524">
    <property type="term" value="F:ATP binding"/>
    <property type="evidence" value="ECO:0007669"/>
    <property type="project" value="UniProtKB-UniRule"/>
</dbReference>
<dbReference type="GO" id="GO:0016887">
    <property type="term" value="F:ATP hydrolysis activity"/>
    <property type="evidence" value="ECO:0007669"/>
    <property type="project" value="InterPro"/>
</dbReference>
<dbReference type="GO" id="GO:0140664">
    <property type="term" value="F:ATP-dependent DNA damage sensor activity"/>
    <property type="evidence" value="ECO:0007669"/>
    <property type="project" value="InterPro"/>
</dbReference>
<dbReference type="GO" id="GO:0003684">
    <property type="term" value="F:damaged DNA binding"/>
    <property type="evidence" value="ECO:0007669"/>
    <property type="project" value="UniProtKB-UniRule"/>
</dbReference>
<dbReference type="GO" id="GO:0003697">
    <property type="term" value="F:single-stranded DNA binding"/>
    <property type="evidence" value="ECO:0007669"/>
    <property type="project" value="UniProtKB-UniRule"/>
</dbReference>
<dbReference type="GO" id="GO:0006310">
    <property type="term" value="P:DNA recombination"/>
    <property type="evidence" value="ECO:0007669"/>
    <property type="project" value="UniProtKB-UniRule"/>
</dbReference>
<dbReference type="GO" id="GO:0006281">
    <property type="term" value="P:DNA repair"/>
    <property type="evidence" value="ECO:0007669"/>
    <property type="project" value="UniProtKB-UniRule"/>
</dbReference>
<dbReference type="GO" id="GO:0009432">
    <property type="term" value="P:SOS response"/>
    <property type="evidence" value="ECO:0007669"/>
    <property type="project" value="UniProtKB-UniRule"/>
</dbReference>
<dbReference type="CDD" id="cd00983">
    <property type="entry name" value="RecA"/>
    <property type="match status" value="1"/>
</dbReference>
<dbReference type="FunFam" id="3.40.50.300:FF:000087">
    <property type="entry name" value="Recombinase RecA"/>
    <property type="match status" value="1"/>
</dbReference>
<dbReference type="Gene3D" id="3.40.50.300">
    <property type="entry name" value="P-loop containing nucleotide triphosphate hydrolases"/>
    <property type="match status" value="1"/>
</dbReference>
<dbReference type="HAMAP" id="MF_00268">
    <property type="entry name" value="RecA"/>
    <property type="match status" value="1"/>
</dbReference>
<dbReference type="InterPro" id="IPR003593">
    <property type="entry name" value="AAA+_ATPase"/>
</dbReference>
<dbReference type="InterPro" id="IPR013765">
    <property type="entry name" value="DNA_recomb/repair_RecA"/>
</dbReference>
<dbReference type="InterPro" id="IPR020584">
    <property type="entry name" value="DNA_recomb/repair_RecA_CS"/>
</dbReference>
<dbReference type="InterPro" id="IPR027417">
    <property type="entry name" value="P-loop_NTPase"/>
</dbReference>
<dbReference type="InterPro" id="IPR049261">
    <property type="entry name" value="RecA-like_C"/>
</dbReference>
<dbReference type="InterPro" id="IPR049428">
    <property type="entry name" value="RecA-like_N"/>
</dbReference>
<dbReference type="InterPro" id="IPR020588">
    <property type="entry name" value="RecA_ATP-bd"/>
</dbReference>
<dbReference type="InterPro" id="IPR023400">
    <property type="entry name" value="RecA_C_sf"/>
</dbReference>
<dbReference type="InterPro" id="IPR020587">
    <property type="entry name" value="RecA_monomer-monomer_interface"/>
</dbReference>
<dbReference type="NCBIfam" id="TIGR02012">
    <property type="entry name" value="tigrfam_recA"/>
    <property type="match status" value="1"/>
</dbReference>
<dbReference type="PANTHER" id="PTHR45900:SF1">
    <property type="entry name" value="MITOCHONDRIAL DNA REPAIR PROTEIN RECA HOMOLOG-RELATED"/>
    <property type="match status" value="1"/>
</dbReference>
<dbReference type="PANTHER" id="PTHR45900">
    <property type="entry name" value="RECA"/>
    <property type="match status" value="1"/>
</dbReference>
<dbReference type="Pfam" id="PF00154">
    <property type="entry name" value="RecA"/>
    <property type="match status" value="1"/>
</dbReference>
<dbReference type="Pfam" id="PF21096">
    <property type="entry name" value="RecA_C"/>
    <property type="match status" value="1"/>
</dbReference>
<dbReference type="PRINTS" id="PR00142">
    <property type="entry name" value="RECA"/>
</dbReference>
<dbReference type="SMART" id="SM00382">
    <property type="entry name" value="AAA"/>
    <property type="match status" value="1"/>
</dbReference>
<dbReference type="SUPFAM" id="SSF52540">
    <property type="entry name" value="P-loop containing nucleoside triphosphate hydrolases"/>
    <property type="match status" value="1"/>
</dbReference>
<dbReference type="SUPFAM" id="SSF54752">
    <property type="entry name" value="RecA protein, C-terminal domain"/>
    <property type="match status" value="1"/>
</dbReference>
<dbReference type="PROSITE" id="PS00321">
    <property type="entry name" value="RECA_1"/>
    <property type="match status" value="1"/>
</dbReference>
<dbReference type="PROSITE" id="PS50162">
    <property type="entry name" value="RECA_2"/>
    <property type="match status" value="1"/>
</dbReference>
<dbReference type="PROSITE" id="PS50163">
    <property type="entry name" value="RECA_3"/>
    <property type="match status" value="1"/>
</dbReference>
<proteinExistence type="inferred from homology"/>
<sequence length="358" mass="38447">MAINTDTSGKQKALTMVLNQIERSFGKGAIMRLGDATRMRVETISTGALTLDLALGGGLPKGRVIEIYGPESSGKTTVALHAIAEVQKEGGIAAFVDAEHALDPTYASALGVDIQNLLVSQPDTGESALEIVDQLVRSAAVDIVVIDSVAALVPRAEIEGDMGDAHVGLQARLMSQALRKITGNIGKSGCTVIFINQLRQKIGVTYGSPETTTGGNALKFYASVRLDIRRIQTLKKGTDEFGNRVKVKVAKNKVAPPFRIAEFDIIFGKGVSTLGCLVDLAEETGILLRKGAWYSYNGDNISQGRDNAIKYLEEKPEFAEQIKQQVREKLDKGAVVSANSVAKANEEDEEDVDLDEEE</sequence>